<proteinExistence type="evidence at transcript level"/>
<gene>
    <name type="primary">psiE</name>
    <name type="ordered locus">STM4226</name>
</gene>
<sequence length="136" mass="15604">MMPLSRSRLEFIATILQNVLNLGLLTLGLILVVFLGKETVHLADALFAPEQASKYELVEGLVIYFLYFEFIALIVKYFKSGLHFPLRYFVYIGITAIVRLIIVDHKTPMDVLLYSAAILLLVITLWLCNSNRLRRE</sequence>
<protein>
    <recommendedName>
        <fullName>Protein PsiE</fullName>
    </recommendedName>
    <alternativeName>
        <fullName>Mig-7</fullName>
    </alternativeName>
</protein>
<name>PSIE_SALTY</name>
<evidence type="ECO:0000250" key="1"/>
<evidence type="ECO:0000255" key="2"/>
<evidence type="ECO:0000305" key="3"/>
<dbReference type="EMBL" id="AF020807">
    <property type="protein sequence ID" value="AAB80738.1"/>
    <property type="molecule type" value="Genomic_DNA"/>
</dbReference>
<dbReference type="EMBL" id="AE006468">
    <property type="protein sequence ID" value="AAL23050.1"/>
    <property type="molecule type" value="Genomic_DNA"/>
</dbReference>
<dbReference type="RefSeq" id="WP_000982749.1">
    <property type="nucleotide sequence ID" value="NC_003197.2"/>
</dbReference>
<dbReference type="SMR" id="P0A279"/>
<dbReference type="STRING" id="99287.STM4226"/>
<dbReference type="PaxDb" id="99287-STM4226"/>
<dbReference type="KEGG" id="stm:STM4226"/>
<dbReference type="PATRIC" id="fig|99287.12.peg.4446"/>
<dbReference type="HOGENOM" id="CLU_127561_0_1_6"/>
<dbReference type="OMA" id="HEWHQKV"/>
<dbReference type="PhylomeDB" id="P0A279"/>
<dbReference type="BioCyc" id="SENT99287:STM4226-MONOMER"/>
<dbReference type="Proteomes" id="UP000001014">
    <property type="component" value="Chromosome"/>
</dbReference>
<dbReference type="GO" id="GO:0005886">
    <property type="term" value="C:plasma membrane"/>
    <property type="evidence" value="ECO:0000318"/>
    <property type="project" value="GO_Central"/>
</dbReference>
<dbReference type="GO" id="GO:0016036">
    <property type="term" value="P:cellular response to phosphate starvation"/>
    <property type="evidence" value="ECO:0007669"/>
    <property type="project" value="InterPro"/>
</dbReference>
<dbReference type="HAMAP" id="MF_01048">
    <property type="entry name" value="PsiE"/>
    <property type="match status" value="1"/>
</dbReference>
<dbReference type="InterPro" id="IPR009315">
    <property type="entry name" value="P_starv_induced_PsiE"/>
</dbReference>
<dbReference type="InterPro" id="IPR020948">
    <property type="entry name" value="P_starv_induced_PsiE-like"/>
</dbReference>
<dbReference type="NCBIfam" id="NF002764">
    <property type="entry name" value="PRK02833.1-2"/>
    <property type="match status" value="1"/>
</dbReference>
<dbReference type="NCBIfam" id="NF002765">
    <property type="entry name" value="PRK02833.1-3"/>
    <property type="match status" value="1"/>
</dbReference>
<dbReference type="NCBIfam" id="NF002767">
    <property type="entry name" value="PRK02833.1-5"/>
    <property type="match status" value="1"/>
</dbReference>
<dbReference type="PANTHER" id="PTHR37819">
    <property type="entry name" value="PROTEIN PSIE"/>
    <property type="match status" value="1"/>
</dbReference>
<dbReference type="PANTHER" id="PTHR37819:SF1">
    <property type="entry name" value="PROTEIN PSIE"/>
    <property type="match status" value="1"/>
</dbReference>
<dbReference type="Pfam" id="PF06146">
    <property type="entry name" value="PsiE"/>
    <property type="match status" value="1"/>
</dbReference>
<dbReference type="PIRSF" id="PIRSF029598">
    <property type="entry name" value="PsiE"/>
    <property type="match status" value="1"/>
</dbReference>
<reference key="1">
    <citation type="journal article" date="1997" name="Science">
        <title>Fluorescence-based isolation of bacterial genes expressed within host cells.</title>
        <authorList>
            <person name="Valdivia R.H."/>
            <person name="Falkow S."/>
        </authorList>
    </citation>
    <scope>NUCLEOTIDE SEQUENCE [GENOMIC DNA]</scope>
</reference>
<reference key="2">
    <citation type="journal article" date="2001" name="Nature">
        <title>Complete genome sequence of Salmonella enterica serovar Typhimurium LT2.</title>
        <authorList>
            <person name="McClelland M."/>
            <person name="Sanderson K.E."/>
            <person name="Spieth J."/>
            <person name="Clifton S.W."/>
            <person name="Latreille P."/>
            <person name="Courtney L."/>
            <person name="Porwollik S."/>
            <person name="Ali J."/>
            <person name="Dante M."/>
            <person name="Du F."/>
            <person name="Hou S."/>
            <person name="Layman D."/>
            <person name="Leonard S."/>
            <person name="Nguyen C."/>
            <person name="Scott K."/>
            <person name="Holmes A."/>
            <person name="Grewal N."/>
            <person name="Mulvaney E."/>
            <person name="Ryan E."/>
            <person name="Sun H."/>
            <person name="Florea L."/>
            <person name="Miller W."/>
            <person name="Stoneking T."/>
            <person name="Nhan M."/>
            <person name="Waterston R."/>
            <person name="Wilson R.K."/>
        </authorList>
    </citation>
    <scope>NUCLEOTIDE SEQUENCE [LARGE SCALE GENOMIC DNA]</scope>
    <source>
        <strain>LT2 / SGSC1412 / ATCC 700720</strain>
    </source>
</reference>
<comment type="subcellular location">
    <subcellularLocation>
        <location evidence="1">Cell inner membrane</location>
        <topology evidence="1">Multi-pass membrane protein</topology>
    </subcellularLocation>
</comment>
<comment type="induction">
    <text>Expression is under the control of the two-component regulatory system PhoQ/PhoP.</text>
</comment>
<comment type="similarity">
    <text evidence="3">Belongs to the PsiE family.</text>
</comment>
<keyword id="KW-0997">Cell inner membrane</keyword>
<keyword id="KW-1003">Cell membrane</keyword>
<keyword id="KW-0472">Membrane</keyword>
<keyword id="KW-1185">Reference proteome</keyword>
<keyword id="KW-0812">Transmembrane</keyword>
<keyword id="KW-1133">Transmembrane helix</keyword>
<feature type="chain" id="PRO_0000160294" description="Protein PsiE">
    <location>
        <begin position="1"/>
        <end position="136"/>
    </location>
</feature>
<feature type="topological domain" description="Cytoplasmic" evidence="2">
    <location>
        <begin position="1"/>
        <end position="14"/>
    </location>
</feature>
<feature type="transmembrane region" description="Helical" evidence="2">
    <location>
        <begin position="15"/>
        <end position="35"/>
    </location>
</feature>
<feature type="topological domain" description="Periplasmic" evidence="2">
    <location>
        <begin position="36"/>
        <end position="54"/>
    </location>
</feature>
<feature type="transmembrane region" description="Helical" evidence="2">
    <location>
        <begin position="55"/>
        <end position="75"/>
    </location>
</feature>
<feature type="topological domain" description="Cytoplasmic" evidence="2">
    <location>
        <begin position="76"/>
        <end position="82"/>
    </location>
</feature>
<feature type="transmembrane region" description="Helical" evidence="2">
    <location>
        <begin position="83"/>
        <end position="103"/>
    </location>
</feature>
<feature type="topological domain" description="Periplasmic" evidence="2">
    <location>
        <begin position="104"/>
        <end position="107"/>
    </location>
</feature>
<feature type="transmembrane region" description="Helical" evidence="2">
    <location>
        <begin position="108"/>
        <end position="128"/>
    </location>
</feature>
<feature type="topological domain" description="Cytoplasmic" evidence="2">
    <location>
        <begin position="129"/>
        <end position="136"/>
    </location>
</feature>
<accession>P0A279</accession>
<accession>O30901</accession>
<organism>
    <name type="scientific">Salmonella typhimurium (strain LT2 / SGSC1412 / ATCC 700720)</name>
    <dbReference type="NCBI Taxonomy" id="99287"/>
    <lineage>
        <taxon>Bacteria</taxon>
        <taxon>Pseudomonadati</taxon>
        <taxon>Pseudomonadota</taxon>
        <taxon>Gammaproteobacteria</taxon>
        <taxon>Enterobacterales</taxon>
        <taxon>Enterobacteriaceae</taxon>
        <taxon>Salmonella</taxon>
    </lineage>
</organism>